<accession>Q9ZJD7</accession>
<keyword id="KW-0963">Cytoplasm</keyword>
<keyword id="KW-0269">Exonuclease</keyword>
<keyword id="KW-0378">Hydrolase</keyword>
<keyword id="KW-0540">Nuclease</keyword>
<gene>
    <name evidence="1" type="primary">xseB</name>
    <name type="ordered locus">jhp_1375</name>
</gene>
<evidence type="ECO:0000255" key="1">
    <source>
        <dbReference type="HAMAP-Rule" id="MF_00337"/>
    </source>
</evidence>
<evidence type="ECO:0000256" key="2">
    <source>
        <dbReference type="SAM" id="MobiDB-lite"/>
    </source>
</evidence>
<evidence type="ECO:0000305" key="3"/>
<reference key="1">
    <citation type="journal article" date="1999" name="Nature">
        <title>Genomic sequence comparison of two unrelated isolates of the human gastric pathogen Helicobacter pylori.</title>
        <authorList>
            <person name="Alm R.A."/>
            <person name="Ling L.-S.L."/>
            <person name="Moir D.T."/>
            <person name="King B.L."/>
            <person name="Brown E.D."/>
            <person name="Doig P.C."/>
            <person name="Smith D.R."/>
            <person name="Noonan B."/>
            <person name="Guild B.C."/>
            <person name="deJonge B.L."/>
            <person name="Carmel G."/>
            <person name="Tummino P.J."/>
            <person name="Caruso A."/>
            <person name="Uria-Nickelsen M."/>
            <person name="Mills D.M."/>
            <person name="Ives C."/>
            <person name="Gibson R."/>
            <person name="Merberg D."/>
            <person name="Mills S.D."/>
            <person name="Jiang Q."/>
            <person name="Taylor D.E."/>
            <person name="Vovis G.F."/>
            <person name="Trust T.J."/>
        </authorList>
    </citation>
    <scope>NUCLEOTIDE SEQUENCE [LARGE SCALE GENOMIC DNA]</scope>
    <source>
        <strain>J99 / ATCC 700824</strain>
    </source>
</reference>
<sequence>MQDELFETEKAPQKNAKNAKNAPKKSFEEHVHSLERVIDRLNDPNLSLKDGMDLYKTAMQELFLAQKLLENAYSEYEKLQTPNKKA</sequence>
<organism>
    <name type="scientific">Helicobacter pylori (strain J99 / ATCC 700824)</name>
    <name type="common">Campylobacter pylori J99</name>
    <dbReference type="NCBI Taxonomy" id="85963"/>
    <lineage>
        <taxon>Bacteria</taxon>
        <taxon>Pseudomonadati</taxon>
        <taxon>Campylobacterota</taxon>
        <taxon>Epsilonproteobacteria</taxon>
        <taxon>Campylobacterales</taxon>
        <taxon>Helicobacteraceae</taxon>
        <taxon>Helicobacter</taxon>
    </lineage>
</organism>
<proteinExistence type="inferred from homology"/>
<dbReference type="EC" id="3.1.11.6" evidence="1"/>
<dbReference type="EMBL" id="AE001439">
    <property type="protein sequence ID" value="AAD06946.1"/>
    <property type="molecule type" value="Genomic_DNA"/>
</dbReference>
<dbReference type="PIR" id="B71815">
    <property type="entry name" value="B71815"/>
</dbReference>
<dbReference type="RefSeq" id="WP_001150271.1">
    <property type="nucleotide sequence ID" value="NC_000921.1"/>
</dbReference>
<dbReference type="SMR" id="Q9ZJD7"/>
<dbReference type="KEGG" id="hpj:jhp_1375"/>
<dbReference type="PATRIC" id="fig|85963.30.peg.1176"/>
<dbReference type="eggNOG" id="COG1722">
    <property type="taxonomic scope" value="Bacteria"/>
</dbReference>
<dbReference type="Proteomes" id="UP000000804">
    <property type="component" value="Chromosome"/>
</dbReference>
<dbReference type="GO" id="GO:0005737">
    <property type="term" value="C:cytoplasm"/>
    <property type="evidence" value="ECO:0007669"/>
    <property type="project" value="UniProtKB-SubCell"/>
</dbReference>
<dbReference type="GO" id="GO:0009318">
    <property type="term" value="C:exodeoxyribonuclease VII complex"/>
    <property type="evidence" value="ECO:0007669"/>
    <property type="project" value="InterPro"/>
</dbReference>
<dbReference type="GO" id="GO:0008855">
    <property type="term" value="F:exodeoxyribonuclease VII activity"/>
    <property type="evidence" value="ECO:0007669"/>
    <property type="project" value="UniProtKB-UniRule"/>
</dbReference>
<dbReference type="GO" id="GO:0006308">
    <property type="term" value="P:DNA catabolic process"/>
    <property type="evidence" value="ECO:0007669"/>
    <property type="project" value="UniProtKB-UniRule"/>
</dbReference>
<dbReference type="Gene3D" id="1.10.287.1040">
    <property type="entry name" value="Exonuclease VII, small subunit"/>
    <property type="match status" value="1"/>
</dbReference>
<dbReference type="HAMAP" id="MF_00337">
    <property type="entry name" value="Exonuc_7_S"/>
    <property type="match status" value="1"/>
</dbReference>
<dbReference type="InterPro" id="IPR003761">
    <property type="entry name" value="Exonuc_VII_S"/>
</dbReference>
<dbReference type="InterPro" id="IPR037004">
    <property type="entry name" value="Exonuc_VII_ssu_sf"/>
</dbReference>
<dbReference type="NCBIfam" id="NF010668">
    <property type="entry name" value="PRK14065.1"/>
    <property type="match status" value="1"/>
</dbReference>
<dbReference type="NCBIfam" id="TIGR01280">
    <property type="entry name" value="xseB"/>
    <property type="match status" value="1"/>
</dbReference>
<dbReference type="Pfam" id="PF02609">
    <property type="entry name" value="Exonuc_VII_S"/>
    <property type="match status" value="1"/>
</dbReference>
<dbReference type="SUPFAM" id="SSF116842">
    <property type="entry name" value="XseB-like"/>
    <property type="match status" value="1"/>
</dbReference>
<comment type="function">
    <text evidence="1">Bidirectionally degrades single-stranded DNA into large acid-insoluble oligonucleotides, which are then degraded further into small acid-soluble oligonucleotides.</text>
</comment>
<comment type="catalytic activity">
    <reaction evidence="1">
        <text>Exonucleolytic cleavage in either 5'- to 3'- or 3'- to 5'-direction to yield nucleoside 5'-phosphates.</text>
        <dbReference type="EC" id="3.1.11.6"/>
    </reaction>
</comment>
<comment type="subunit">
    <text evidence="1">Heterooligomer composed of large and small subunits.</text>
</comment>
<comment type="subcellular location">
    <subcellularLocation>
        <location evidence="1">Cytoplasm</location>
    </subcellularLocation>
</comment>
<comment type="similarity">
    <text evidence="1 3">Belongs to the XseB family.</text>
</comment>
<name>EX7S_HELPJ</name>
<protein>
    <recommendedName>
        <fullName evidence="1">Exodeoxyribonuclease 7 small subunit</fullName>
        <ecNumber evidence="1">3.1.11.6</ecNumber>
    </recommendedName>
    <alternativeName>
        <fullName evidence="1">Exodeoxyribonuclease VII small subunit</fullName>
        <shortName evidence="1">Exonuclease VII small subunit</shortName>
    </alternativeName>
</protein>
<feature type="chain" id="PRO_0000206955" description="Exodeoxyribonuclease 7 small subunit">
    <location>
        <begin position="1"/>
        <end position="86"/>
    </location>
</feature>
<feature type="region of interest" description="Disordered" evidence="2">
    <location>
        <begin position="1"/>
        <end position="26"/>
    </location>
</feature>